<sequence>MPKYVEGIELTQEGMHAIFERMGHPNITSGTIYNGEPTIDKGALDRQGFMPVLTGVSPRQDSGHWIMLIKGQGNQYFLFDPLGESSGKYYQNILAKKLPGATLSVIPNNAGLNMGLCGYWVASVGLRAHAALTQPIPPSLRNLGQTITQEMRDELTQDGSEKITQWLRAVGNEFPDGDIQPDATALRRATEKNVRIDEFQPVLTGTSPKEISINPTAPQEVSVPTWNGFSLYTDETVRNAARYAYDNYLGKPYTGTVEATPVNFGGQMVYRQHHGLAHTLRTMAYAEIIVEEARKAKLRGESLKTFADGRTLADVTPEELRKIMIAQAFFVTGRDDEESSKNYEKYHEQSRDAFLKYVEENKSTLIPDVFKDEKDVKFYADVIEDKDHKWADSPAHVLVNQGHMVDLVRVKQPPESYLEYYFSQLQPWIGSTATEAVFATQRQFFHATYEAVAGFDSENKEPHLVVDGLGRYVIGQDGNPIREESDDEDEEESGELKFFSQKKKLEENQRYMRVDEYLKLDEVQKRFPGAGKKLDGGLPGLKEYQYLQRLNSINRARCENDVDFCLGQLQTAHHQTKITPIKRAFQSSSEKARRQPNMDEIAAARIVQQIMANPDCIHDDHVFLNGQKLEEKFFRDLLAKCDMAIVGSLLNDTDIRNIDTLMQHERNTEFHSTDAKAKPVKLGETWEKTIRSGGGVTQIKHDLIFLMQNDAWYHTRVNAIAQNRDKDSTFKEVLITALMTPLTNKSLMDTSRSPAPKTLFRGLDLSEEFKNKLINQAETIIANTTEHLFTDLSTEAFKQIKLNDFSQVSARTCASTSTNIEVPRTIFGSNTIFEILDPDGLLHPKQVGTHVSGSESEYSIYLPEDVALVPIKVSFDGKTGKGKDRHIFTLVAVKSPDFTPRHESGYAVGPLLKMQTPKLEEIQRLVEQAREEPDLERVFNLQSRVARQAKFSTESGYKTFLNEKVAPVLEQSLNGLLDNNVTILGKVLSAFPSDGQWSAFNSVEARQMKIQMDAIKQMVEKKAVLEGQILPALAQCQNALEKQNIAGALQALRNIPSEKEMQTMLSISGGLRGQIQRAKQDLTETLEPLQRAITAKLVSDQEKVKVRYEKLIAGIPQQIADLEKAELADLAKVKKVVSRFNHLQEELKLLRNEKIRMHTGSEKVDFSDIAQLEAQLQKIHTKLYDAYLVELTKEISALVKEKPKNLADVKRMVSNFYAMSADIEQLRQEKIKEHGESKDPIDMSDIDKLKEELQKINQFLVKAMGTNIRVSLNQMEVKTFDAQEKEAQQNLKQLDALINKLESSDAVQKQKEELEKLNQLLVEKRKAYPAMVQLQFRSEALIIHLRELCEAHQAQMAKTRNVRAQEITNGRWKVQWLTDWVGLTTDERVTLANKEKELAKFKEDLNNDEYDLQELISNLAEKNPSELEEAIGISKESAQKLHKLLTHLNHSTTFMSKIEQRLQSIDELLNEFGKQAPRTEMIKTVEEKQGTLLRL</sequence>
<gene>
    <name type="primary">sidE</name>
    <name type="ordered locus">lpg0234</name>
</gene>
<reference key="1">
    <citation type="journal article" date="2004" name="Science">
        <title>The genomic sequence of the accidental pathogen Legionella pneumophila.</title>
        <authorList>
            <person name="Chien M."/>
            <person name="Morozova I."/>
            <person name="Shi S."/>
            <person name="Sheng H."/>
            <person name="Chen J."/>
            <person name="Gomez S.M."/>
            <person name="Asamani G."/>
            <person name="Hill K."/>
            <person name="Nuara J."/>
            <person name="Feder M."/>
            <person name="Rineer J."/>
            <person name="Greenberg J.J."/>
            <person name="Steshenko V."/>
            <person name="Park S.H."/>
            <person name="Zhao B."/>
            <person name="Teplitskaya E."/>
            <person name="Edwards J.R."/>
            <person name="Pampou S."/>
            <person name="Georghiou A."/>
            <person name="Chou I.-C."/>
            <person name="Iannuccilli W."/>
            <person name="Ulz M.E."/>
            <person name="Kim D.H."/>
            <person name="Geringer-Sameth A."/>
            <person name="Goldsberry C."/>
            <person name="Morozov P."/>
            <person name="Fischer S.G."/>
            <person name="Segal G."/>
            <person name="Qu X."/>
            <person name="Rzhetsky A."/>
            <person name="Zhang P."/>
            <person name="Cayanis E."/>
            <person name="De Jong P.J."/>
            <person name="Ju J."/>
            <person name="Kalachikov S."/>
            <person name="Shuman H.A."/>
            <person name="Russo J.J."/>
        </authorList>
    </citation>
    <scope>NUCLEOTIDE SEQUENCE [LARGE SCALE GENOMIC DNA]</scope>
    <source>
        <strain>Philadelphia 1 / ATCC 33152 / DSM 7513</strain>
    </source>
</reference>
<reference key="2">
    <citation type="journal article" date="2016" name="Cell">
        <title>Phosphoribosylation of ubiquitin promotes serine ubiquitination and impairs conventional ubiquitination.</title>
        <authorList>
            <person name="Bhogaraju S."/>
            <person name="Kalayil S."/>
            <person name="Liu Y."/>
            <person name="Bonn F."/>
            <person name="Colby T."/>
            <person name="Matic I."/>
            <person name="Dikic I."/>
        </authorList>
    </citation>
    <scope>FUNCTION</scope>
</reference>
<reference key="3">
    <citation type="journal article" date="2016" name="Nature">
        <title>Ubiquitination independent of E1 and E2 enzymes by bacterial effectors.</title>
        <authorList>
            <person name="Qiu J."/>
            <person name="Sheedlo M.J."/>
            <person name="Yu K."/>
            <person name="Tan Y."/>
            <person name="Nakayasu E.S."/>
            <person name="Das C."/>
            <person name="Liu X."/>
            <person name="Luo Z.Q."/>
        </authorList>
    </citation>
    <scope>FUNCTION AS AN UBIQUITINATING ENZYME</scope>
    <scope>CATALYTIC ACTIVITY</scope>
    <scope>DISRUPTION PHENOTYPE</scope>
    <scope>DOMAIN</scope>
    <source>
        <strain>Philadelphia 1 / Lp02</strain>
    </source>
</reference>
<reference key="4">
    <citation type="journal article" date="2018" name="Cell">
        <title>Structural Insights into non-canonical ubiquitination catalyzed by SidE.</title>
        <authorList>
            <person name="Wang Y."/>
            <person name="Shi M."/>
            <person name="Feng H."/>
            <person name="Zhu Y."/>
            <person name="Liu S."/>
            <person name="Gao A."/>
            <person name="Gao P."/>
        </authorList>
    </citation>
    <scope>FUNCTION</scope>
    <scope>SUBUNIT</scope>
</reference>
<dbReference type="EC" id="3.4.22.-" evidence="2"/>
<dbReference type="EC" id="2.3.2.-" evidence="7"/>
<dbReference type="EC" id="2.4.2.31" evidence="7"/>
<dbReference type="EMBL" id="AE017354">
    <property type="protein sequence ID" value="AAU26341.1"/>
    <property type="status" value="ALT_INIT"/>
    <property type="molecule type" value="Genomic_DNA"/>
</dbReference>
<dbReference type="RefSeq" id="WP_015444908.1">
    <property type="nucleotide sequence ID" value="NC_002942.5"/>
</dbReference>
<dbReference type="RefSeq" id="YP_094288.1">
    <property type="nucleotide sequence ID" value="NC_002942.5"/>
</dbReference>
<dbReference type="SMR" id="Q5ZYX7"/>
<dbReference type="STRING" id="272624.lpg0234"/>
<dbReference type="PaxDb" id="272624-lpg0234"/>
<dbReference type="GeneID" id="57034239"/>
<dbReference type="KEGG" id="lpn:lpg0234"/>
<dbReference type="PATRIC" id="fig|272624.6.peg.248"/>
<dbReference type="eggNOG" id="COG1196">
    <property type="taxonomic scope" value="Bacteria"/>
</dbReference>
<dbReference type="HOGENOM" id="CLU_002024_0_0_6"/>
<dbReference type="OrthoDB" id="5647340at2"/>
<dbReference type="Proteomes" id="UP000000609">
    <property type="component" value="Chromosome"/>
</dbReference>
<dbReference type="GO" id="GO:0008234">
    <property type="term" value="F:cysteine-type peptidase activity"/>
    <property type="evidence" value="ECO:0007669"/>
    <property type="project" value="UniProtKB-KW"/>
</dbReference>
<dbReference type="GO" id="GO:0106274">
    <property type="term" value="F:NAD+-protein-arginine ADP-ribosyltransferase activity"/>
    <property type="evidence" value="ECO:0007669"/>
    <property type="project" value="UniProtKB-EC"/>
</dbReference>
<dbReference type="GO" id="GO:0000166">
    <property type="term" value="F:nucleotide binding"/>
    <property type="evidence" value="ECO:0007669"/>
    <property type="project" value="UniProtKB-KW"/>
</dbReference>
<dbReference type="GO" id="GO:0016779">
    <property type="term" value="F:nucleotidyltransferase activity"/>
    <property type="evidence" value="ECO:0007669"/>
    <property type="project" value="UniProtKB-KW"/>
</dbReference>
<dbReference type="GO" id="GO:0016579">
    <property type="term" value="P:protein deubiquitination"/>
    <property type="evidence" value="ECO:0007669"/>
    <property type="project" value="InterPro"/>
</dbReference>
<dbReference type="GO" id="GO:0006508">
    <property type="term" value="P:proteolysis"/>
    <property type="evidence" value="ECO:0007669"/>
    <property type="project" value="UniProtKB-KW"/>
</dbReference>
<dbReference type="InterPro" id="IPR043934">
    <property type="entry name" value="SidE_DUB"/>
</dbReference>
<dbReference type="InterPro" id="IPR043935">
    <property type="entry name" value="SidE_mART"/>
</dbReference>
<dbReference type="InterPro" id="IPR021014">
    <property type="entry name" value="SidE_PDE"/>
</dbReference>
<dbReference type="Pfam" id="PF19049">
    <property type="entry name" value="SidE_DUB"/>
    <property type="match status" value="1"/>
</dbReference>
<dbReference type="Pfam" id="PF19048">
    <property type="entry name" value="SidE_mART"/>
    <property type="match status" value="1"/>
</dbReference>
<dbReference type="Pfam" id="PF12252">
    <property type="entry name" value="SidE_PDE"/>
    <property type="match status" value="1"/>
</dbReference>
<proteinExistence type="evidence at protein level"/>
<protein>
    <recommendedName>
        <fullName>Ubiquitinating enzyme SidE</fullName>
    </recommendedName>
    <domain>
        <recommendedName>
            <fullName evidence="2">Deubiquitinase</fullName>
            <shortName evidence="2">DUB</shortName>
            <ecNumber evidence="2">3.4.22.-</ecNumber>
        </recommendedName>
        <alternativeName>
            <fullName evidence="2">Deubiquitinating enzyme</fullName>
        </alternativeName>
    </domain>
    <domain>
        <recommendedName>
            <fullName>Ubiquitin transferase</fullName>
            <ecNumber evidence="7">2.3.2.-</ecNumber>
        </recommendedName>
    </domain>
    <domain>
        <recommendedName>
            <fullName evidence="7">Mono-ADP-ribosyltransferase</fullName>
            <shortName>mART</shortName>
            <ecNumber evidence="7">2.4.2.31</ecNumber>
        </recommendedName>
    </domain>
</protein>
<evidence type="ECO:0000250" key="1">
    <source>
        <dbReference type="UniProtKB" id="P21454"/>
    </source>
</evidence>
<evidence type="ECO:0000250" key="2">
    <source>
        <dbReference type="UniProtKB" id="Q5ZTK4"/>
    </source>
</evidence>
<evidence type="ECO:0000256" key="3">
    <source>
        <dbReference type="SAM" id="MobiDB-lite"/>
    </source>
</evidence>
<evidence type="ECO:0000269" key="4">
    <source>
    </source>
</evidence>
<evidence type="ECO:0000269" key="5">
    <source>
    </source>
</evidence>
<evidence type="ECO:0000269" key="6">
    <source>
    </source>
</evidence>
<evidence type="ECO:0000305" key="7">
    <source>
    </source>
</evidence>
<evidence type="ECO:0000305" key="8">
    <source>
    </source>
</evidence>
<organism>
    <name type="scientific">Legionella pneumophila subsp. pneumophila (strain Philadelphia 1 / ATCC 33152 / DSM 7513)</name>
    <dbReference type="NCBI Taxonomy" id="272624"/>
    <lineage>
        <taxon>Bacteria</taxon>
        <taxon>Pseudomonadati</taxon>
        <taxon>Pseudomonadota</taxon>
        <taxon>Gammaproteobacteria</taxon>
        <taxon>Legionellales</taxon>
        <taxon>Legionellaceae</taxon>
        <taxon>Legionella</taxon>
    </lineage>
</organism>
<comment type="function">
    <text evidence="4 5 6">Effector that interferes with the host cell ubiquitin pathway and is required for intracellular bacterial replication. Catalyzes the ubiquitination of several host Rab small GTPases associated with the endoplasmic reticulum during L.pneumophila infection, without engaging the standard cellular enzyme cascade (E1 and E2) (PubMed:27049943). Transfers an ADP-ribose moiety from NAD to the 'Arg-42' residue of ubiquitin in a reaction that releases nicotinamide (PubMed:27049943, PubMed:29731171). The modified ubiquitin is subsequently transferred to serine residues of the substrate protein via a phosphoribose linker that results in the release of AMP (PubMed:27912065).</text>
</comment>
<comment type="catalytic activity">
    <reaction evidence="4">
        <text>L-arginyl-[protein] + NAD(+) = N(omega)-(ADP-D-ribosyl)-L-arginyl-[protein] + nicotinamide + H(+)</text>
        <dbReference type="Rhea" id="RHEA:19149"/>
        <dbReference type="Rhea" id="RHEA-COMP:10532"/>
        <dbReference type="Rhea" id="RHEA-COMP:15087"/>
        <dbReference type="ChEBI" id="CHEBI:15378"/>
        <dbReference type="ChEBI" id="CHEBI:17154"/>
        <dbReference type="ChEBI" id="CHEBI:29965"/>
        <dbReference type="ChEBI" id="CHEBI:57540"/>
        <dbReference type="ChEBI" id="CHEBI:142554"/>
        <dbReference type="EC" id="2.4.2.31"/>
    </reaction>
</comment>
<comment type="subunit">
    <text evidence="6">Homodimer.</text>
</comment>
<comment type="PTM">
    <text evidence="2">Glutamylated by SidJ; glutamylation inhibits sidE activity to catalyze the production of ADP-ribosylated ubiquitin.</text>
</comment>
<comment type="disruption phenotype">
    <text evidence="4">Cells lacking all four members of the SidE family (SdeA, SdeB, SdeC and SidE) show no intracellular growth defect in mouse bone marrow macrophages (BMM), but display attenuated growth inside the protozoan hosts A.castellanii and D.discoideum. This mutant no longer recruits the endoplasmic reticulum (ER) marker GFP-HDEL to its vacuoles, even at 10 hours post infection, and is unable to induce RAB33B ubiquitination during infection.</text>
</comment>
<comment type="similarity">
    <text evidence="7">Belongs to the SidE family.</text>
</comment>
<comment type="sequence caution" evidence="8">
    <conflict type="erroneous initiation">
        <sequence resource="EMBL-CDS" id="AAU26341"/>
    </conflict>
    <text>Extended N-terminus.</text>
</comment>
<accession>Q5ZYX7</accession>
<feature type="chain" id="PRO_0000448402" description="Ubiquitinating enzyme SidE">
    <location>
        <begin position="1"/>
        <end position="1495"/>
    </location>
</feature>
<feature type="region of interest" description="Deubiquitinase" evidence="2">
    <location>
        <begin position="1"/>
        <end position="192"/>
    </location>
</feature>
<feature type="region of interest" description="Disordered" evidence="3">
    <location>
        <begin position="476"/>
        <end position="497"/>
    </location>
</feature>
<feature type="region of interest" description="Mono-ADP-ribosyltransferase" evidence="2">
    <location>
        <begin position="755" status="uncertain"/>
        <end position="995" status="uncertain"/>
    </location>
</feature>
<feature type="compositionally biased region" description="Acidic residues" evidence="3">
    <location>
        <begin position="484"/>
        <end position="493"/>
    </location>
</feature>
<feature type="active site" description="For deubiquitinase activity" evidence="2">
    <location>
        <position position="64"/>
    </location>
</feature>
<feature type="active site" description="For deubiquitinase activity" evidence="2">
    <location>
        <position position="80"/>
    </location>
</feature>
<feature type="active site" description="Nucleophile; for deubiquitinase activity" evidence="2">
    <location>
        <position position="117"/>
    </location>
</feature>
<feature type="binding site" evidence="1 2">
    <location>
        <begin position="761"/>
        <end position="767"/>
    </location>
    <ligand>
        <name>NAD(+)</name>
        <dbReference type="ChEBI" id="CHEBI:57540"/>
    </ligand>
</feature>
<feature type="binding site" evidence="1 2">
    <location>
        <position position="857"/>
    </location>
    <ligand>
        <name>NAD(+)</name>
        <dbReference type="ChEBI" id="CHEBI:57540"/>
    </ligand>
</feature>
<feature type="modified residue" description="5-glutamyl glutamate" evidence="2">
    <location>
        <position position="855"/>
    </location>
</feature>
<keyword id="KW-0328">Glycosyltransferase</keyword>
<keyword id="KW-0378">Hydrolase</keyword>
<keyword id="KW-1017">Isopeptide bond</keyword>
<keyword id="KW-0511">Multifunctional enzyme</keyword>
<keyword id="KW-0520">NAD</keyword>
<keyword id="KW-0547">Nucleotide-binding</keyword>
<keyword id="KW-0548">Nucleotidyltransferase</keyword>
<keyword id="KW-0645">Protease</keyword>
<keyword id="KW-1185">Reference proteome</keyword>
<keyword id="KW-0788">Thiol protease</keyword>
<keyword id="KW-0808">Transferase</keyword>
<keyword id="KW-0833">Ubl conjugation pathway</keyword>
<keyword id="KW-0843">Virulence</keyword>
<name>SIDE_LEGPH</name>